<accession>Q5YCC7</accession>
<feature type="chain" id="PRO_0000259604" description="Transmembrane channel-like protein 3">
    <location>
        <begin position="1"/>
        <end position="1138"/>
    </location>
</feature>
<feature type="topological domain" description="Cytoplasmic" evidence="1">
    <location>
        <begin position="1"/>
        <end position="155"/>
    </location>
</feature>
<feature type="transmembrane region" description="Helical" evidence="1">
    <location>
        <begin position="156"/>
        <end position="176"/>
    </location>
</feature>
<feature type="topological domain" description="Extracellular" evidence="1">
    <location>
        <begin position="177"/>
        <end position="202"/>
    </location>
</feature>
<feature type="transmembrane region" description="Helical" evidence="1">
    <location>
        <begin position="203"/>
        <end position="223"/>
    </location>
</feature>
<feature type="topological domain" description="Cytoplasmic" evidence="1">
    <location>
        <begin position="224"/>
        <end position="233"/>
    </location>
</feature>
<feature type="transmembrane region" description="Helical" evidence="1">
    <location>
        <begin position="234"/>
        <end position="254"/>
    </location>
</feature>
<feature type="topological domain" description="Extracellular" evidence="1">
    <location>
        <begin position="255"/>
        <end position="327"/>
    </location>
</feature>
<feature type="transmembrane region" description="Helical" evidence="1">
    <location>
        <begin position="328"/>
        <end position="348"/>
    </location>
</feature>
<feature type="topological domain" description="Cytoplasmic" evidence="1">
    <location>
        <begin position="349"/>
        <end position="369"/>
    </location>
</feature>
<feature type="transmembrane region" description="Helical" evidence="1">
    <location>
        <begin position="370"/>
        <end position="390"/>
    </location>
</feature>
<feature type="topological domain" description="Extracellular" evidence="1">
    <location>
        <begin position="391"/>
        <end position="401"/>
    </location>
</feature>
<feature type="transmembrane region" description="Helical" evidence="1">
    <location>
        <begin position="402"/>
        <end position="422"/>
    </location>
</feature>
<feature type="topological domain" description="Cytoplasmic" evidence="1">
    <location>
        <begin position="423"/>
        <end position="508"/>
    </location>
</feature>
<feature type="transmembrane region" description="Helical" evidence="1">
    <location>
        <begin position="509"/>
        <end position="529"/>
    </location>
</feature>
<feature type="topological domain" description="Extracellular" evidence="1">
    <location>
        <begin position="530"/>
        <end position="569"/>
    </location>
</feature>
<feature type="transmembrane region" description="Helical" evidence="1">
    <location>
        <begin position="570"/>
        <end position="590"/>
    </location>
</feature>
<feature type="topological domain" description="Cytoplasmic" evidence="1">
    <location>
        <begin position="591"/>
        <end position="618"/>
    </location>
</feature>
<feature type="transmembrane region" description="Helical" evidence="1">
    <location>
        <begin position="619"/>
        <end position="639"/>
    </location>
</feature>
<feature type="topological domain" description="Extracellular" evidence="1">
    <location>
        <begin position="640"/>
        <end position="676"/>
    </location>
</feature>
<feature type="transmembrane region" description="Helical" evidence="1">
    <location>
        <begin position="677"/>
        <end position="697"/>
    </location>
</feature>
<feature type="topological domain" description="Cytoplasmic" evidence="1">
    <location>
        <begin position="698"/>
        <end position="1138"/>
    </location>
</feature>
<feature type="region of interest" description="Disordered" evidence="2">
    <location>
        <begin position="1"/>
        <end position="20"/>
    </location>
</feature>
<feature type="region of interest" description="Disordered" evidence="2">
    <location>
        <begin position="29"/>
        <end position="54"/>
    </location>
</feature>
<feature type="region of interest" description="Disordered" evidence="2">
    <location>
        <begin position="753"/>
        <end position="859"/>
    </location>
</feature>
<feature type="region of interest" description="Disordered" evidence="2">
    <location>
        <begin position="973"/>
        <end position="1005"/>
    </location>
</feature>
<feature type="region of interest" description="Disordered" evidence="2">
    <location>
        <begin position="1065"/>
        <end position="1095"/>
    </location>
</feature>
<feature type="compositionally biased region" description="Low complexity" evidence="2">
    <location>
        <begin position="1"/>
        <end position="15"/>
    </location>
</feature>
<feature type="compositionally biased region" description="Polar residues" evidence="2">
    <location>
        <begin position="753"/>
        <end position="763"/>
    </location>
</feature>
<feature type="compositionally biased region" description="Basic and acidic residues" evidence="2">
    <location>
        <begin position="764"/>
        <end position="773"/>
    </location>
</feature>
<feature type="compositionally biased region" description="Polar residues" evidence="2">
    <location>
        <begin position="777"/>
        <end position="795"/>
    </location>
</feature>
<feature type="compositionally biased region" description="Polar residues" evidence="2">
    <location>
        <begin position="804"/>
        <end position="813"/>
    </location>
</feature>
<feature type="compositionally biased region" description="Low complexity" evidence="2">
    <location>
        <begin position="828"/>
        <end position="845"/>
    </location>
</feature>
<feature type="compositionally biased region" description="Basic residues" evidence="2">
    <location>
        <begin position="989"/>
        <end position="998"/>
    </location>
</feature>
<feature type="compositionally biased region" description="Low complexity" evidence="2">
    <location>
        <begin position="1074"/>
        <end position="1095"/>
    </location>
</feature>
<feature type="glycosylation site" description="N-linked (GlcNAc...) asparagine" evidence="1">
    <location>
        <position position="272"/>
    </location>
</feature>
<name>TMC3_CHICK</name>
<gene>
    <name evidence="5" type="primary">Tmc3</name>
</gene>
<evidence type="ECO:0000255" key="1"/>
<evidence type="ECO:0000256" key="2">
    <source>
        <dbReference type="SAM" id="MobiDB-lite"/>
    </source>
</evidence>
<evidence type="ECO:0000269" key="3">
    <source>
    </source>
</evidence>
<evidence type="ECO:0000305" key="4"/>
<evidence type="ECO:0000312" key="5">
    <source>
        <dbReference type="EMBL" id="AAT85601.1"/>
    </source>
</evidence>
<sequence>MEAAPGTAAAAAKPAKSCKKYRMGKRHANIYTYQEPPHSNSDEDISEEKADSQDPEQVFQNIQYQKEVMSNIRCRPWPMRQKLRVLRQAKEIVLKYEGRLTRTRGYQAAGAELWRKFLRLAYNFVVLFIPWEMRIKKIESHFGSGVASYFIFLRWLFGINIVLTIMTGAFVVLPELLAGAPFGSTVSKTIRQEDLKTAQDLDTIWSLGGYLQYSVLFYGYYGSDRKIGKAGYRLPLAYFLVGMAVFAYSFIILLKKMAKNSRMSLASASDENYTFCWRLFCAWDYLIGNPEAAESKAAAIVNSIREAILEEQEKKKSKNLAVTISLRIIANILVLLSLTGSIYIIYFVVDRSQKLENNKRELTLWEKNEVSVVVSLITMIAPSAFELVAALEMYHPRTTLRFQLARVLVLYLGNLYSLIIALLDKVNSMSVTNSIYSIYQVSNNSTPSSATGTPAKEDTLSATISDAQMNSSESHAQSLPTAGSLVNNTASSNSAQNQCWETYVGQEMLKLSIIDMIFTVASILLIDFFRGLCVRYLSDCWCWDLESKFPEYGEFKIAENVLHLVYNQGMIWMGAFFSPCLPAFNVLKLIGLMYLRSWAVLTCNVPHQQVFRASRSNNFYLAMLLFMLFLCMLPTIFAIARYKPSLSCGPFSGQEKIYDIVSETIQNDFPAWFNSVIAYISSPVVVLPALLLLFMLIYYLQSIARSLKFTNNQLRMKIQAERTEDKKKVVQMAVGQNLVDIPDDQIMSDFTQNSEGTRFQSLDGSDKRPDKDGGLISQESSVRASTPRKNGSVLNFESPVSKGTRIQTISQTVPHAVPSTDVARPVNTTPTTSASLTPAPSVSSAQKPRNDHTTNRYPSVVHGSASELCKTKPYTPVTFKKRIGDVHSEPLFRKSIRQVNPDAFGAGAPVFVGRRPHATRYFIVNENEPRKKSARSTSRLQRQFRIEEPEDIVELYPCNVRRYVVQTPQCMYSPHPSEDEEDEEALGRHYVKRSHRPRSLSDLRPAPRFYIGDRADGHVLTSKVHYKSWDDGFELDLDRPPYAYKKVHLKNVEADQHYLEPQVKPKTKHMLEQSLTESDSVSIESSSDPQNSSNDQYIQVIHSKEKYLKPGTKLTKKKSNTNIELNMSEPNELVCSNV</sequence>
<protein>
    <recommendedName>
        <fullName>Transmembrane channel-like protein 3</fullName>
    </recommendedName>
</protein>
<reference evidence="4 5" key="1">
    <citation type="journal article" date="2005" name="Neuroscience">
        <title>Identification of chicken transmembrane channel-like (TMC) genes: expression analysis in the cochlea.</title>
        <authorList>
            <person name="Mutai H."/>
            <person name="Mann S."/>
            <person name="Heller S."/>
        </authorList>
    </citation>
    <scope>NUCLEOTIDE SEQUENCE [MRNA]</scope>
    <scope>TISSUE SPECIFICITY</scope>
</reference>
<comment type="function">
    <text evidence="4">Probable component of an ion channel.</text>
</comment>
<comment type="subcellular location">
    <subcellularLocation>
        <location evidence="1">Membrane</location>
        <topology evidence="1">Multi-pass membrane protein</topology>
    </subcellularLocation>
</comment>
<comment type="tissue specificity">
    <text evidence="3">Expressed in a range of tissues including cerebrum, cerebellum, retina, cochlea, lung, liver and heart. Also expressed in the apical, medial and basal portions of the basillar papilla.</text>
</comment>
<comment type="similarity">
    <text evidence="1">Belongs to the TMC family.</text>
</comment>
<keyword id="KW-0325">Glycoprotein</keyword>
<keyword id="KW-0472">Membrane</keyword>
<keyword id="KW-1185">Reference proteome</keyword>
<keyword id="KW-0812">Transmembrane</keyword>
<keyword id="KW-1133">Transmembrane helix</keyword>
<proteinExistence type="evidence at transcript level"/>
<dbReference type="EMBL" id="AY581310">
    <property type="protein sequence ID" value="AAT85601.1"/>
    <property type="molecule type" value="mRNA"/>
</dbReference>
<dbReference type="RefSeq" id="NP_001005820.1">
    <property type="nucleotide sequence ID" value="NM_001005820.1"/>
</dbReference>
<dbReference type="SMR" id="Q5YCC7"/>
<dbReference type="STRING" id="9031.ENSGALP00000010288"/>
<dbReference type="GlyCosmos" id="Q5YCC7">
    <property type="glycosylation" value="1 site, No reported glycans"/>
</dbReference>
<dbReference type="GlyGen" id="Q5YCC7">
    <property type="glycosylation" value="3 sites"/>
</dbReference>
<dbReference type="PaxDb" id="9031-ENSGALP00000010288"/>
<dbReference type="GeneID" id="415470"/>
<dbReference type="KEGG" id="gga:415470"/>
<dbReference type="CTD" id="342125"/>
<dbReference type="VEuPathDB" id="HostDB:geneid_415470"/>
<dbReference type="eggNOG" id="ENOG502QQGX">
    <property type="taxonomic scope" value="Eukaryota"/>
</dbReference>
<dbReference type="InParanoid" id="Q5YCC7"/>
<dbReference type="OrthoDB" id="5831905at2759"/>
<dbReference type="PhylomeDB" id="Q5YCC7"/>
<dbReference type="PRO" id="PR:Q5YCC7"/>
<dbReference type="Proteomes" id="UP000000539">
    <property type="component" value="Unassembled WGS sequence"/>
</dbReference>
<dbReference type="GO" id="GO:0005886">
    <property type="term" value="C:plasma membrane"/>
    <property type="evidence" value="ECO:0007669"/>
    <property type="project" value="InterPro"/>
</dbReference>
<dbReference type="GO" id="GO:0008381">
    <property type="term" value="F:mechanosensitive monoatomic ion channel activity"/>
    <property type="evidence" value="ECO:0000318"/>
    <property type="project" value="GO_Central"/>
</dbReference>
<dbReference type="InterPro" id="IPR038900">
    <property type="entry name" value="TMC"/>
</dbReference>
<dbReference type="InterPro" id="IPR012496">
    <property type="entry name" value="TMC_dom"/>
</dbReference>
<dbReference type="PANTHER" id="PTHR23302:SF35">
    <property type="entry name" value="TRANSMEMBRANE CHANNEL-LIKE PROTEIN 3"/>
    <property type="match status" value="1"/>
</dbReference>
<dbReference type="PANTHER" id="PTHR23302">
    <property type="entry name" value="TRANSMEMBRANE CHANNEL-RELATED"/>
    <property type="match status" value="1"/>
</dbReference>
<dbReference type="Pfam" id="PF07810">
    <property type="entry name" value="TMC"/>
    <property type="match status" value="1"/>
</dbReference>
<organism>
    <name type="scientific">Gallus gallus</name>
    <name type="common">Chicken</name>
    <dbReference type="NCBI Taxonomy" id="9031"/>
    <lineage>
        <taxon>Eukaryota</taxon>
        <taxon>Metazoa</taxon>
        <taxon>Chordata</taxon>
        <taxon>Craniata</taxon>
        <taxon>Vertebrata</taxon>
        <taxon>Euteleostomi</taxon>
        <taxon>Archelosauria</taxon>
        <taxon>Archosauria</taxon>
        <taxon>Dinosauria</taxon>
        <taxon>Saurischia</taxon>
        <taxon>Theropoda</taxon>
        <taxon>Coelurosauria</taxon>
        <taxon>Aves</taxon>
        <taxon>Neognathae</taxon>
        <taxon>Galloanserae</taxon>
        <taxon>Galliformes</taxon>
        <taxon>Phasianidae</taxon>
        <taxon>Phasianinae</taxon>
        <taxon>Gallus</taxon>
    </lineage>
</organism>